<reference key="1">
    <citation type="journal article" date="2007" name="Nature">
        <title>Evolution of genes and genomes on the Drosophila phylogeny.</title>
        <authorList>
            <consortium name="Drosophila 12 genomes consortium"/>
        </authorList>
    </citation>
    <scope>NUCLEOTIDE SEQUENCE [LARGE SCALE GENOMIC DNA]</scope>
    <source>
        <strain>Tai18E2 / Tucson 14021-0261.01</strain>
    </source>
</reference>
<protein>
    <recommendedName>
        <fullName>Lipoyl synthase 2, mitochondrial</fullName>
        <ecNumber evidence="1">2.8.1.8</ecNumber>
    </recommendedName>
    <alternativeName>
        <fullName evidence="1">Lipoate synthase 2</fullName>
        <shortName evidence="1">LS 2</shortName>
        <shortName evidence="1">Lip-syn 2</shortName>
    </alternativeName>
    <alternativeName>
        <fullName evidence="1">Lipoic acid synthase 2</fullName>
    </alternativeName>
</protein>
<keyword id="KW-0004">4Fe-4S</keyword>
<keyword id="KW-0408">Iron</keyword>
<keyword id="KW-0411">Iron-sulfur</keyword>
<keyword id="KW-0479">Metal-binding</keyword>
<keyword id="KW-0496">Mitochondrion</keyword>
<keyword id="KW-0949">S-adenosyl-L-methionine</keyword>
<keyword id="KW-0808">Transferase</keyword>
<sequence length="379" mass="42853">MFGMLRALKTHVEVPIVVATRAASTNAEKLEEIRERLAKGPNFQDFVQNPDNSRSEWENYEGKLRREKGEEQRLRLPPWLKTTIPVGKNYAKIKAQMRELKLSTVCEEARCPNIGECWGGGEHGTQTATIMLMGDTCTRGCRFCSVKTARKPPPLDVNEPVNTATAIASWGLDYIVLTSVDRDDLPDGGSKHIAETVREIKARNSNIFVECLVPDFRGNLECVETIANSGLDVYAHNIETVEKLTPYVRDRRAHYRQTLQVLTEAKRFNPNLITKSSIMLGLGETDEEIESTLKDLRTAGVDCVTLGQYMQPTNKHLKVIEYVTPEKFKHWEERGNELGFLYTASGPLVRSSYKAGEFFITSILENRKKRQNATELSKE</sequence>
<evidence type="ECO:0000255" key="1">
    <source>
        <dbReference type="HAMAP-Rule" id="MF_03123"/>
    </source>
</evidence>
<evidence type="ECO:0000255" key="2">
    <source>
        <dbReference type="PROSITE-ProRule" id="PRU01266"/>
    </source>
</evidence>
<organism>
    <name type="scientific">Drosophila yakuba</name>
    <name type="common">Fruit fly</name>
    <dbReference type="NCBI Taxonomy" id="7245"/>
    <lineage>
        <taxon>Eukaryota</taxon>
        <taxon>Metazoa</taxon>
        <taxon>Ecdysozoa</taxon>
        <taxon>Arthropoda</taxon>
        <taxon>Hexapoda</taxon>
        <taxon>Insecta</taxon>
        <taxon>Pterygota</taxon>
        <taxon>Neoptera</taxon>
        <taxon>Endopterygota</taxon>
        <taxon>Diptera</taxon>
        <taxon>Brachycera</taxon>
        <taxon>Muscomorpha</taxon>
        <taxon>Ephydroidea</taxon>
        <taxon>Drosophilidae</taxon>
        <taxon>Drosophila</taxon>
        <taxon>Sophophora</taxon>
    </lineage>
</organism>
<gene>
    <name evidence="1" type="primary">Las2</name>
    <name type="ORF">GE22400</name>
</gene>
<feature type="chain" id="PRO_0000398225" description="Lipoyl synthase 2, mitochondrial">
    <location>
        <begin position="1"/>
        <end position="379"/>
    </location>
</feature>
<feature type="domain" description="Radical SAM core" evidence="2">
    <location>
        <begin position="122"/>
        <end position="341"/>
    </location>
</feature>
<feature type="binding site" evidence="1">
    <location>
        <position position="106"/>
    </location>
    <ligand>
        <name>[4Fe-4S] cluster</name>
        <dbReference type="ChEBI" id="CHEBI:49883"/>
        <label>1</label>
    </ligand>
</feature>
<feature type="binding site" evidence="1">
    <location>
        <position position="111"/>
    </location>
    <ligand>
        <name>[4Fe-4S] cluster</name>
        <dbReference type="ChEBI" id="CHEBI:49883"/>
        <label>1</label>
    </ligand>
</feature>
<feature type="binding site" evidence="1">
    <location>
        <position position="117"/>
    </location>
    <ligand>
        <name>[4Fe-4S] cluster</name>
        <dbReference type="ChEBI" id="CHEBI:49883"/>
        <label>1</label>
    </ligand>
</feature>
<feature type="binding site" evidence="1">
    <location>
        <position position="137"/>
    </location>
    <ligand>
        <name>[4Fe-4S] cluster</name>
        <dbReference type="ChEBI" id="CHEBI:49883"/>
        <label>2</label>
        <note>4Fe-4S-S-AdoMet</note>
    </ligand>
</feature>
<feature type="binding site" evidence="1">
    <location>
        <position position="141"/>
    </location>
    <ligand>
        <name>[4Fe-4S] cluster</name>
        <dbReference type="ChEBI" id="CHEBI:49883"/>
        <label>2</label>
        <note>4Fe-4S-S-AdoMet</note>
    </ligand>
</feature>
<feature type="binding site" evidence="1">
    <location>
        <position position="144"/>
    </location>
    <ligand>
        <name>[4Fe-4S] cluster</name>
        <dbReference type="ChEBI" id="CHEBI:49883"/>
        <label>2</label>
        <note>4Fe-4S-S-AdoMet</note>
    </ligand>
</feature>
<feature type="binding site" evidence="1">
    <location>
        <position position="352"/>
    </location>
    <ligand>
        <name>[4Fe-4S] cluster</name>
        <dbReference type="ChEBI" id="CHEBI:49883"/>
        <label>1</label>
    </ligand>
</feature>
<proteinExistence type="inferred from homology"/>
<accession>B4PF83</accession>
<comment type="function">
    <text evidence="1">Catalyzes the radical-mediated insertion of two sulfur atoms into the C-6 and C-8 positions of the octanoyl moiety bound to the lipoyl domains of lipoate-dependent enzymes, thereby converting the octanoylated domains into lipoylated derivatives.</text>
</comment>
<comment type="catalytic activity">
    <reaction evidence="1">
        <text>[[Fe-S] cluster scaffold protein carrying a second [4Fe-4S](2+) cluster] + N(6)-octanoyl-L-lysyl-[protein] + 2 oxidized [2Fe-2S]-[ferredoxin] + 2 S-adenosyl-L-methionine + 4 H(+) = [[Fe-S] cluster scaffold protein] + N(6)-[(R)-dihydrolipoyl]-L-lysyl-[protein] + 4 Fe(3+) + 2 hydrogen sulfide + 2 5'-deoxyadenosine + 2 L-methionine + 2 reduced [2Fe-2S]-[ferredoxin]</text>
        <dbReference type="Rhea" id="RHEA:16585"/>
        <dbReference type="Rhea" id="RHEA-COMP:9928"/>
        <dbReference type="Rhea" id="RHEA-COMP:10000"/>
        <dbReference type="Rhea" id="RHEA-COMP:10001"/>
        <dbReference type="Rhea" id="RHEA-COMP:10475"/>
        <dbReference type="Rhea" id="RHEA-COMP:14568"/>
        <dbReference type="Rhea" id="RHEA-COMP:14569"/>
        <dbReference type="ChEBI" id="CHEBI:15378"/>
        <dbReference type="ChEBI" id="CHEBI:17319"/>
        <dbReference type="ChEBI" id="CHEBI:29034"/>
        <dbReference type="ChEBI" id="CHEBI:29919"/>
        <dbReference type="ChEBI" id="CHEBI:33722"/>
        <dbReference type="ChEBI" id="CHEBI:33737"/>
        <dbReference type="ChEBI" id="CHEBI:33738"/>
        <dbReference type="ChEBI" id="CHEBI:57844"/>
        <dbReference type="ChEBI" id="CHEBI:59789"/>
        <dbReference type="ChEBI" id="CHEBI:78809"/>
        <dbReference type="ChEBI" id="CHEBI:83100"/>
        <dbReference type="EC" id="2.8.1.8"/>
    </reaction>
</comment>
<comment type="cofactor">
    <cofactor evidence="1">
        <name>[4Fe-4S] cluster</name>
        <dbReference type="ChEBI" id="CHEBI:49883"/>
    </cofactor>
    <text evidence="1">Binds 2 [4Fe-4S] clusters per subunit. One cluster is coordinated with 3 cysteines and an exchangeable S-adenosyl-L-methionine.</text>
</comment>
<comment type="pathway">
    <text evidence="1">Protein modification; protein lipoylation via endogenous pathway; protein N(6)-(lipoyl)lysine from octanoyl-[acyl-carrier-protein]: step 2/2.</text>
</comment>
<comment type="subcellular location">
    <subcellularLocation>
        <location evidence="1">Mitochondrion</location>
    </subcellularLocation>
</comment>
<comment type="miscellaneous">
    <text evidence="1">This protein may be expected to contain an N-terminal transit peptide but none has been predicted.</text>
</comment>
<comment type="similarity">
    <text evidence="1">Belongs to the radical SAM superfamily. Lipoyl synthase family.</text>
</comment>
<dbReference type="EC" id="2.8.1.8" evidence="1"/>
<dbReference type="EMBL" id="CM000159">
    <property type="protein sequence ID" value="EDW95169.1"/>
    <property type="molecule type" value="Genomic_DNA"/>
</dbReference>
<dbReference type="RefSeq" id="XP_002095457.1">
    <property type="nucleotide sequence ID" value="XM_002095421.2"/>
</dbReference>
<dbReference type="SMR" id="B4PF83"/>
<dbReference type="EnsemblMetazoa" id="FBtr0268918">
    <property type="protein sequence ID" value="FBpp0267410"/>
    <property type="gene ID" value="FBgn0239623"/>
</dbReference>
<dbReference type="KEGG" id="dya:Dyak_GE22400"/>
<dbReference type="eggNOG" id="KOG2672">
    <property type="taxonomic scope" value="Eukaryota"/>
</dbReference>
<dbReference type="HOGENOM" id="CLU_033144_1_2_1"/>
<dbReference type="OMA" id="RSCAFCQ"/>
<dbReference type="OrthoDB" id="3231at2759"/>
<dbReference type="PhylomeDB" id="B4PF83"/>
<dbReference type="UniPathway" id="UPA00538">
    <property type="reaction ID" value="UER00593"/>
</dbReference>
<dbReference type="Proteomes" id="UP000002282">
    <property type="component" value="Chromosome 3L"/>
</dbReference>
<dbReference type="GO" id="GO:0005739">
    <property type="term" value="C:mitochondrion"/>
    <property type="evidence" value="ECO:0007669"/>
    <property type="project" value="UniProtKB-SubCell"/>
</dbReference>
<dbReference type="GO" id="GO:0051539">
    <property type="term" value="F:4 iron, 4 sulfur cluster binding"/>
    <property type="evidence" value="ECO:0007669"/>
    <property type="project" value="UniProtKB-UniRule"/>
</dbReference>
<dbReference type="GO" id="GO:0016992">
    <property type="term" value="F:lipoate synthase activity"/>
    <property type="evidence" value="ECO:0007669"/>
    <property type="project" value="UniProtKB-UniRule"/>
</dbReference>
<dbReference type="GO" id="GO:0046872">
    <property type="term" value="F:metal ion binding"/>
    <property type="evidence" value="ECO:0007669"/>
    <property type="project" value="UniProtKB-KW"/>
</dbReference>
<dbReference type="CDD" id="cd01335">
    <property type="entry name" value="Radical_SAM"/>
    <property type="match status" value="1"/>
</dbReference>
<dbReference type="FunFam" id="3.20.20.70:FF:000036">
    <property type="entry name" value="Lipoyl synthase, mitochondrial"/>
    <property type="match status" value="1"/>
</dbReference>
<dbReference type="Gene3D" id="3.20.20.70">
    <property type="entry name" value="Aldolase class I"/>
    <property type="match status" value="1"/>
</dbReference>
<dbReference type="HAMAP" id="MF_00206">
    <property type="entry name" value="Lipoyl_synth"/>
    <property type="match status" value="1"/>
</dbReference>
<dbReference type="InterPro" id="IPR013785">
    <property type="entry name" value="Aldolase_TIM"/>
</dbReference>
<dbReference type="InterPro" id="IPR006638">
    <property type="entry name" value="Elp3/MiaA/NifB-like_rSAM"/>
</dbReference>
<dbReference type="InterPro" id="IPR031691">
    <property type="entry name" value="LIAS_N"/>
</dbReference>
<dbReference type="InterPro" id="IPR003698">
    <property type="entry name" value="Lipoyl_synth"/>
</dbReference>
<dbReference type="InterPro" id="IPR007197">
    <property type="entry name" value="rSAM"/>
</dbReference>
<dbReference type="NCBIfam" id="TIGR00510">
    <property type="entry name" value="lipA"/>
    <property type="match status" value="1"/>
</dbReference>
<dbReference type="NCBIfam" id="NF004019">
    <property type="entry name" value="PRK05481.1"/>
    <property type="match status" value="1"/>
</dbReference>
<dbReference type="NCBIfam" id="NF009544">
    <property type="entry name" value="PRK12928.1"/>
    <property type="match status" value="1"/>
</dbReference>
<dbReference type="PANTHER" id="PTHR10949">
    <property type="entry name" value="LIPOYL SYNTHASE"/>
    <property type="match status" value="1"/>
</dbReference>
<dbReference type="PANTHER" id="PTHR10949:SF0">
    <property type="entry name" value="LIPOYL SYNTHASE, MITOCHONDRIAL"/>
    <property type="match status" value="1"/>
</dbReference>
<dbReference type="Pfam" id="PF16881">
    <property type="entry name" value="LIAS_N"/>
    <property type="match status" value="1"/>
</dbReference>
<dbReference type="Pfam" id="PF04055">
    <property type="entry name" value="Radical_SAM"/>
    <property type="match status" value="1"/>
</dbReference>
<dbReference type="PIRSF" id="PIRSF005963">
    <property type="entry name" value="Lipoyl_synth"/>
    <property type="match status" value="1"/>
</dbReference>
<dbReference type="SFLD" id="SFLDF00271">
    <property type="entry name" value="lipoyl_synthase"/>
    <property type="match status" value="1"/>
</dbReference>
<dbReference type="SFLD" id="SFLDG01058">
    <property type="entry name" value="lipoyl_synthase_like"/>
    <property type="match status" value="1"/>
</dbReference>
<dbReference type="SMART" id="SM00729">
    <property type="entry name" value="Elp3"/>
    <property type="match status" value="1"/>
</dbReference>
<dbReference type="SUPFAM" id="SSF102114">
    <property type="entry name" value="Radical SAM enzymes"/>
    <property type="match status" value="1"/>
</dbReference>
<dbReference type="PROSITE" id="PS51918">
    <property type="entry name" value="RADICAL_SAM"/>
    <property type="match status" value="1"/>
</dbReference>
<name>LIAS2_DROYA</name>